<accession>Q6D8J0</accession>
<feature type="chain" id="PRO_1000046697" description="DNA mismatch repair protein MutH">
    <location>
        <begin position="1"/>
        <end position="231"/>
    </location>
</feature>
<reference key="1">
    <citation type="journal article" date="2004" name="Proc. Natl. Acad. Sci. U.S.A.">
        <title>Genome sequence of the enterobacterial phytopathogen Erwinia carotovora subsp. atroseptica and characterization of virulence factors.</title>
        <authorList>
            <person name="Bell K.S."/>
            <person name="Sebaihia M."/>
            <person name="Pritchard L."/>
            <person name="Holden M.T.G."/>
            <person name="Hyman L.J."/>
            <person name="Holeva M.C."/>
            <person name="Thomson N.R."/>
            <person name="Bentley S.D."/>
            <person name="Churcher L.J.C."/>
            <person name="Mungall K."/>
            <person name="Atkin R."/>
            <person name="Bason N."/>
            <person name="Brooks K."/>
            <person name="Chillingworth T."/>
            <person name="Clark K."/>
            <person name="Doggett J."/>
            <person name="Fraser A."/>
            <person name="Hance Z."/>
            <person name="Hauser H."/>
            <person name="Jagels K."/>
            <person name="Moule S."/>
            <person name="Norbertczak H."/>
            <person name="Ormond D."/>
            <person name="Price C."/>
            <person name="Quail M.A."/>
            <person name="Sanders M."/>
            <person name="Walker D."/>
            <person name="Whitehead S."/>
            <person name="Salmond G.P.C."/>
            <person name="Birch P.R.J."/>
            <person name="Parkhill J."/>
            <person name="Toth I.K."/>
        </authorList>
    </citation>
    <scope>NUCLEOTIDE SEQUENCE [LARGE SCALE GENOMIC DNA]</scope>
    <source>
        <strain>SCRI 1043 / ATCC BAA-672</strain>
    </source>
</reference>
<comment type="function">
    <text evidence="1">Sequence-specific endonuclease that cleaves unmethylated GATC sequences. It is involved in DNA mismatch repair.</text>
</comment>
<comment type="subcellular location">
    <subcellularLocation>
        <location evidence="1">Cytoplasm</location>
    </subcellularLocation>
</comment>
<comment type="similarity">
    <text evidence="1">Belongs to the MutH family.</text>
</comment>
<dbReference type="EMBL" id="BX950851">
    <property type="protein sequence ID" value="CAG73895.1"/>
    <property type="molecule type" value="Genomic_DNA"/>
</dbReference>
<dbReference type="RefSeq" id="WP_011092584.1">
    <property type="nucleotide sequence ID" value="NC_004547.2"/>
</dbReference>
<dbReference type="SMR" id="Q6D8J0"/>
<dbReference type="STRING" id="218491.ECA0984"/>
<dbReference type="GeneID" id="57207811"/>
<dbReference type="KEGG" id="eca:ECA0984"/>
<dbReference type="PATRIC" id="fig|218491.5.peg.990"/>
<dbReference type="eggNOG" id="COG3066">
    <property type="taxonomic scope" value="Bacteria"/>
</dbReference>
<dbReference type="HOGENOM" id="CLU_086669_0_0_6"/>
<dbReference type="OrthoDB" id="5634909at2"/>
<dbReference type="Proteomes" id="UP000007966">
    <property type="component" value="Chromosome"/>
</dbReference>
<dbReference type="GO" id="GO:0005737">
    <property type="term" value="C:cytoplasm"/>
    <property type="evidence" value="ECO:0007669"/>
    <property type="project" value="UniProtKB-SubCell"/>
</dbReference>
<dbReference type="GO" id="GO:0003677">
    <property type="term" value="F:DNA binding"/>
    <property type="evidence" value="ECO:0007669"/>
    <property type="project" value="InterPro"/>
</dbReference>
<dbReference type="GO" id="GO:0004519">
    <property type="term" value="F:endonuclease activity"/>
    <property type="evidence" value="ECO:0007669"/>
    <property type="project" value="UniProtKB-UniRule"/>
</dbReference>
<dbReference type="GO" id="GO:0006304">
    <property type="term" value="P:DNA modification"/>
    <property type="evidence" value="ECO:0007669"/>
    <property type="project" value="InterPro"/>
</dbReference>
<dbReference type="GO" id="GO:0006298">
    <property type="term" value="P:mismatch repair"/>
    <property type="evidence" value="ECO:0007669"/>
    <property type="project" value="UniProtKB-UniRule"/>
</dbReference>
<dbReference type="CDD" id="cd00583">
    <property type="entry name" value="MutH-like"/>
    <property type="match status" value="1"/>
</dbReference>
<dbReference type="FunFam" id="3.40.600.10:FF:000001">
    <property type="entry name" value="DNA mismatch repair protein MutH"/>
    <property type="match status" value="1"/>
</dbReference>
<dbReference type="Gene3D" id="3.40.600.10">
    <property type="entry name" value="DNA mismatch repair MutH/Restriction endonuclease, type II"/>
    <property type="match status" value="1"/>
</dbReference>
<dbReference type="HAMAP" id="MF_00759">
    <property type="entry name" value="MutH"/>
    <property type="match status" value="1"/>
</dbReference>
<dbReference type="InterPro" id="IPR004230">
    <property type="entry name" value="DNA_mismatch_repair_MutH"/>
</dbReference>
<dbReference type="InterPro" id="IPR011337">
    <property type="entry name" value="DNA_rep_MutH/RE_typeII_Sau3AI"/>
</dbReference>
<dbReference type="InterPro" id="IPR037057">
    <property type="entry name" value="DNA_rep_MutH/T2_RE_sf"/>
</dbReference>
<dbReference type="InterPro" id="IPR011335">
    <property type="entry name" value="Restrct_endonuc-II-like"/>
</dbReference>
<dbReference type="NCBIfam" id="TIGR02248">
    <property type="entry name" value="mutH_TIGR"/>
    <property type="match status" value="1"/>
</dbReference>
<dbReference type="NCBIfam" id="NF003458">
    <property type="entry name" value="PRK05070.1"/>
    <property type="match status" value="1"/>
</dbReference>
<dbReference type="Pfam" id="PF02976">
    <property type="entry name" value="MutH"/>
    <property type="match status" value="1"/>
</dbReference>
<dbReference type="SMART" id="SM00927">
    <property type="entry name" value="MutH"/>
    <property type="match status" value="1"/>
</dbReference>
<dbReference type="SUPFAM" id="SSF52980">
    <property type="entry name" value="Restriction endonuclease-like"/>
    <property type="match status" value="1"/>
</dbReference>
<sequence>MNSPSIHTIAPQNEQALLQRAQSLAGYNLAELADIALLPLPANLKRDKGWIGILLERFLGASAGSKPEQDFPEIGVELKTIPIDEQGKPLETTFVCVAPLTGNSGVTWESSHVRHKLARVLWIPVEGSRHIPLGERRIGTPLIWSPNDEEEEQLRCDWEELMDLIVLGRVESITARHGEVLQLRPKAANSRALTEAIGEFGQPILTLPRGFYLKKTFTAPLLARHFMQLSN</sequence>
<name>MUTH_PECAS</name>
<evidence type="ECO:0000255" key="1">
    <source>
        <dbReference type="HAMAP-Rule" id="MF_00759"/>
    </source>
</evidence>
<gene>
    <name evidence="1" type="primary">mutH</name>
    <name type="ordered locus">ECA0984</name>
</gene>
<proteinExistence type="inferred from homology"/>
<keyword id="KW-0963">Cytoplasm</keyword>
<keyword id="KW-0227">DNA damage</keyword>
<keyword id="KW-0234">DNA repair</keyword>
<keyword id="KW-0255">Endonuclease</keyword>
<keyword id="KW-0378">Hydrolase</keyword>
<keyword id="KW-0540">Nuclease</keyword>
<keyword id="KW-1185">Reference proteome</keyword>
<organism>
    <name type="scientific">Pectobacterium atrosepticum (strain SCRI 1043 / ATCC BAA-672)</name>
    <name type="common">Erwinia carotovora subsp. atroseptica</name>
    <dbReference type="NCBI Taxonomy" id="218491"/>
    <lineage>
        <taxon>Bacteria</taxon>
        <taxon>Pseudomonadati</taxon>
        <taxon>Pseudomonadota</taxon>
        <taxon>Gammaproteobacteria</taxon>
        <taxon>Enterobacterales</taxon>
        <taxon>Pectobacteriaceae</taxon>
        <taxon>Pectobacterium</taxon>
    </lineage>
</organism>
<protein>
    <recommendedName>
        <fullName evidence="1">DNA mismatch repair protein MutH</fullName>
    </recommendedName>
    <alternativeName>
        <fullName evidence="1">Methyl-directed mismatch repair protein</fullName>
    </alternativeName>
</protein>